<dbReference type="EMBL" id="AE001437">
    <property type="protein sequence ID" value="AAK80020.1"/>
    <property type="molecule type" value="Genomic_DNA"/>
</dbReference>
<dbReference type="PIR" id="A97154">
    <property type="entry name" value="A97154"/>
</dbReference>
<dbReference type="RefSeq" id="NP_348680.1">
    <property type="nucleotide sequence ID" value="NC_003030.1"/>
</dbReference>
<dbReference type="RefSeq" id="WP_010965361.1">
    <property type="nucleotide sequence ID" value="NC_003030.1"/>
</dbReference>
<dbReference type="SMR" id="Q97HF0"/>
<dbReference type="STRING" id="272562.CA_C2061"/>
<dbReference type="KEGG" id="cac:CA_C2061"/>
<dbReference type="PATRIC" id="fig|272562.8.peg.2267"/>
<dbReference type="eggNOG" id="COG1354">
    <property type="taxonomic scope" value="Bacteria"/>
</dbReference>
<dbReference type="HOGENOM" id="CLU_038686_3_0_9"/>
<dbReference type="OrthoDB" id="9811016at2"/>
<dbReference type="Proteomes" id="UP000000814">
    <property type="component" value="Chromosome"/>
</dbReference>
<dbReference type="GO" id="GO:0005737">
    <property type="term" value="C:cytoplasm"/>
    <property type="evidence" value="ECO:0007669"/>
    <property type="project" value="UniProtKB-SubCell"/>
</dbReference>
<dbReference type="GO" id="GO:0051301">
    <property type="term" value="P:cell division"/>
    <property type="evidence" value="ECO:0007669"/>
    <property type="project" value="UniProtKB-KW"/>
</dbReference>
<dbReference type="GO" id="GO:0007059">
    <property type="term" value="P:chromosome segregation"/>
    <property type="evidence" value="ECO:0007669"/>
    <property type="project" value="UniProtKB-UniRule"/>
</dbReference>
<dbReference type="GO" id="GO:0006260">
    <property type="term" value="P:DNA replication"/>
    <property type="evidence" value="ECO:0007669"/>
    <property type="project" value="UniProtKB-UniRule"/>
</dbReference>
<dbReference type="Gene3D" id="6.10.250.2410">
    <property type="match status" value="1"/>
</dbReference>
<dbReference type="Gene3D" id="1.10.10.580">
    <property type="entry name" value="Structural maintenance of chromosome 1. Chain E"/>
    <property type="match status" value="1"/>
</dbReference>
<dbReference type="HAMAP" id="MF_01805">
    <property type="entry name" value="ScpA"/>
    <property type="match status" value="1"/>
</dbReference>
<dbReference type="InterPro" id="IPR003768">
    <property type="entry name" value="ScpA"/>
</dbReference>
<dbReference type="InterPro" id="IPR023093">
    <property type="entry name" value="ScpA-like_C"/>
</dbReference>
<dbReference type="NCBIfam" id="NF000994">
    <property type="entry name" value="PRK00104.1-3"/>
    <property type="match status" value="1"/>
</dbReference>
<dbReference type="PANTHER" id="PTHR33969">
    <property type="entry name" value="SEGREGATION AND CONDENSATION PROTEIN A"/>
    <property type="match status" value="1"/>
</dbReference>
<dbReference type="PANTHER" id="PTHR33969:SF2">
    <property type="entry name" value="SEGREGATION AND CONDENSATION PROTEIN A"/>
    <property type="match status" value="1"/>
</dbReference>
<dbReference type="Pfam" id="PF02616">
    <property type="entry name" value="SMC_ScpA"/>
    <property type="match status" value="1"/>
</dbReference>
<comment type="function">
    <text evidence="1">Participates in chromosomal partition during cell division. May act via the formation of a condensin-like complex containing Smc and ScpB that pull DNA away from mid-cell into both cell halves.</text>
</comment>
<comment type="subunit">
    <text evidence="1">Component of a cohesin-like complex composed of ScpA, ScpB and the Smc homodimer, in which ScpA and ScpB bind to the head domain of Smc. The presence of the three proteins is required for the association of the complex with DNA.</text>
</comment>
<comment type="subcellular location">
    <subcellularLocation>
        <location evidence="1">Cytoplasm</location>
    </subcellularLocation>
    <text evidence="1">Associated with two foci at the outer edges of the nucleoid region in young cells, and at four foci within both cell halves in older cells.</text>
</comment>
<comment type="similarity">
    <text evidence="1">Belongs to the ScpA family.</text>
</comment>
<keyword id="KW-0131">Cell cycle</keyword>
<keyword id="KW-0132">Cell division</keyword>
<keyword id="KW-0159">Chromosome partition</keyword>
<keyword id="KW-0963">Cytoplasm</keyword>
<keyword id="KW-1185">Reference proteome</keyword>
<protein>
    <recommendedName>
        <fullName evidence="1">Segregation and condensation protein A</fullName>
    </recommendedName>
</protein>
<accession>Q97HF0</accession>
<reference key="1">
    <citation type="journal article" date="2001" name="J. Bacteriol.">
        <title>Genome sequence and comparative analysis of the solvent-producing bacterium Clostridium acetobutylicum.</title>
        <authorList>
            <person name="Noelling J."/>
            <person name="Breton G."/>
            <person name="Omelchenko M.V."/>
            <person name="Makarova K.S."/>
            <person name="Zeng Q."/>
            <person name="Gibson R."/>
            <person name="Lee H.M."/>
            <person name="Dubois J."/>
            <person name="Qiu D."/>
            <person name="Hitti J."/>
            <person name="Wolf Y.I."/>
            <person name="Tatusov R.L."/>
            <person name="Sabathe F."/>
            <person name="Doucette-Stamm L.A."/>
            <person name="Soucaille P."/>
            <person name="Daly M.J."/>
            <person name="Bennett G.N."/>
            <person name="Koonin E.V."/>
            <person name="Smith D.R."/>
        </authorList>
    </citation>
    <scope>NUCLEOTIDE SEQUENCE [LARGE SCALE GENOMIC DNA]</scope>
    <source>
        <strain>ATCC 824 / DSM 792 / JCM 1419 / IAM 19013 / LMG 5710 / NBRC 13948 / NRRL B-527 / VKM B-1787 / 2291 / W</strain>
    </source>
</reference>
<feature type="chain" id="PRO_0000211081" description="Segregation and condensation protein A">
    <location>
        <begin position="1"/>
        <end position="249"/>
    </location>
</feature>
<organism>
    <name type="scientific">Clostridium acetobutylicum (strain ATCC 824 / DSM 792 / JCM 1419 / IAM 19013 / LMG 5710 / NBRC 13948 / NRRL B-527 / VKM B-1787 / 2291 / W)</name>
    <dbReference type="NCBI Taxonomy" id="272562"/>
    <lineage>
        <taxon>Bacteria</taxon>
        <taxon>Bacillati</taxon>
        <taxon>Bacillota</taxon>
        <taxon>Clostridia</taxon>
        <taxon>Eubacteriales</taxon>
        <taxon>Clostridiaceae</taxon>
        <taxon>Clostridium</taxon>
    </lineage>
</organism>
<evidence type="ECO:0000255" key="1">
    <source>
        <dbReference type="HAMAP-Rule" id="MF_01805"/>
    </source>
</evidence>
<sequence>MTLNINIDNFQGPFDLLLHLIRKNKMDIYDIKIFDITNQYIQYLNEMKEMDLEITSEFIVMAATLIEIKSKYLLPKTKEEEEEKEESDPTKELVSKLVEYKKFKLAADFLKNRELDYGEVFSKKPEIIDDRTEDADNKDILKDITLLDMYKLFEKLMEMYRSRINTNNSLPDKIAPDIYKIEDKMDEISEIIKSNKEIYFSNIINKCSNKIEVVVTFLALLELIKLKDIKVYQSNNFKDIYIERVSAVE</sequence>
<name>SCPA_CLOAB</name>
<proteinExistence type="inferred from homology"/>
<gene>
    <name evidence="1" type="primary">scpA</name>
    <name type="ordered locus">CA_C2061</name>
</gene>